<name>Y8420_DICDI</name>
<comment type="subcellular location">
    <subcellularLocation>
        <location evidence="3">Membrane</location>
        <topology evidence="3">Multi-pass membrane protein</topology>
    </subcellularLocation>
</comment>
<feature type="chain" id="PRO_0000350810" description="Uncharacterized transmembrane protein DDB_G0284971">
    <location>
        <begin position="1"/>
        <end position="342"/>
    </location>
</feature>
<feature type="transmembrane region" description="Helical" evidence="1">
    <location>
        <begin position="35"/>
        <end position="55"/>
    </location>
</feature>
<feature type="transmembrane region" description="Helical" evidence="1">
    <location>
        <begin position="134"/>
        <end position="154"/>
    </location>
</feature>
<feature type="transmembrane region" description="Helical" evidence="1">
    <location>
        <begin position="161"/>
        <end position="180"/>
    </location>
</feature>
<feature type="region of interest" description="Disordered" evidence="2">
    <location>
        <begin position="198"/>
        <end position="220"/>
    </location>
</feature>
<feature type="region of interest" description="Disordered" evidence="2">
    <location>
        <begin position="311"/>
        <end position="342"/>
    </location>
</feature>
<reference key="1">
    <citation type="journal article" date="2005" name="Nature">
        <title>The genome of the social amoeba Dictyostelium discoideum.</title>
        <authorList>
            <person name="Eichinger L."/>
            <person name="Pachebat J.A."/>
            <person name="Gloeckner G."/>
            <person name="Rajandream M.A."/>
            <person name="Sucgang R."/>
            <person name="Berriman M."/>
            <person name="Song J."/>
            <person name="Olsen R."/>
            <person name="Szafranski K."/>
            <person name="Xu Q."/>
            <person name="Tunggal B."/>
            <person name="Kummerfeld S."/>
            <person name="Madera M."/>
            <person name="Konfortov B.A."/>
            <person name="Rivero F."/>
            <person name="Bankier A.T."/>
            <person name="Lehmann R."/>
            <person name="Hamlin N."/>
            <person name="Davies R."/>
            <person name="Gaudet P."/>
            <person name="Fey P."/>
            <person name="Pilcher K."/>
            <person name="Chen G."/>
            <person name="Saunders D."/>
            <person name="Sodergren E.J."/>
            <person name="Davis P."/>
            <person name="Kerhornou A."/>
            <person name="Nie X."/>
            <person name="Hall N."/>
            <person name="Anjard C."/>
            <person name="Hemphill L."/>
            <person name="Bason N."/>
            <person name="Farbrother P."/>
            <person name="Desany B."/>
            <person name="Just E."/>
            <person name="Morio T."/>
            <person name="Rost R."/>
            <person name="Churcher C.M."/>
            <person name="Cooper J."/>
            <person name="Haydock S."/>
            <person name="van Driessche N."/>
            <person name="Cronin A."/>
            <person name="Goodhead I."/>
            <person name="Muzny D.M."/>
            <person name="Mourier T."/>
            <person name="Pain A."/>
            <person name="Lu M."/>
            <person name="Harper D."/>
            <person name="Lindsay R."/>
            <person name="Hauser H."/>
            <person name="James K.D."/>
            <person name="Quiles M."/>
            <person name="Madan Babu M."/>
            <person name="Saito T."/>
            <person name="Buchrieser C."/>
            <person name="Wardroper A."/>
            <person name="Felder M."/>
            <person name="Thangavelu M."/>
            <person name="Johnson D."/>
            <person name="Knights A."/>
            <person name="Loulseged H."/>
            <person name="Mungall K.L."/>
            <person name="Oliver K."/>
            <person name="Price C."/>
            <person name="Quail M.A."/>
            <person name="Urushihara H."/>
            <person name="Hernandez J."/>
            <person name="Rabbinowitsch E."/>
            <person name="Steffen D."/>
            <person name="Sanders M."/>
            <person name="Ma J."/>
            <person name="Kohara Y."/>
            <person name="Sharp S."/>
            <person name="Simmonds M.N."/>
            <person name="Spiegler S."/>
            <person name="Tivey A."/>
            <person name="Sugano S."/>
            <person name="White B."/>
            <person name="Walker D."/>
            <person name="Woodward J.R."/>
            <person name="Winckler T."/>
            <person name="Tanaka Y."/>
            <person name="Shaulsky G."/>
            <person name="Schleicher M."/>
            <person name="Weinstock G.M."/>
            <person name="Rosenthal A."/>
            <person name="Cox E.C."/>
            <person name="Chisholm R.L."/>
            <person name="Gibbs R.A."/>
            <person name="Loomis W.F."/>
            <person name="Platzer M."/>
            <person name="Kay R.R."/>
            <person name="Williams J.G."/>
            <person name="Dear P.H."/>
            <person name="Noegel A.A."/>
            <person name="Barrell B.G."/>
            <person name="Kuspa A."/>
        </authorList>
    </citation>
    <scope>NUCLEOTIDE SEQUENCE [LARGE SCALE GENOMIC DNA]</scope>
    <source>
        <strain>AX4</strain>
    </source>
</reference>
<evidence type="ECO:0000255" key="1"/>
<evidence type="ECO:0000256" key="2">
    <source>
        <dbReference type="SAM" id="MobiDB-lite"/>
    </source>
</evidence>
<evidence type="ECO:0000305" key="3"/>
<protein>
    <recommendedName>
        <fullName>Uncharacterized transmembrane protein DDB_G0284971</fullName>
    </recommendedName>
</protein>
<sequence length="342" mass="40210">MNIPIDRVTQLQDIYIFETAINQTVSNIQKKKKNYFRVSLVLLTLLIISLVWCFSKYKLQQQEFIINNGNNSNIQQLQQQQQLNNLDSTTIYTTNDNGDINFHNDNNNNNNYRDNQSSNQKIEQQTLTALDYSLLFLPSSVLSLSLIFSLIIYFSIDDPFLFITRCNSTLYLFNIYYCFSNKKIMILPKKQLNNNYYSSDNYSNYQQQPQQQPQQQQQYNTGYNQHQYTDENEYNHRGNRLVSNPSSTIQRNKKFDTNNNYNFNNNNYNYNSNFNNNNNNNNINNNNNNTNNSNINIISNNNNNINNNNNIINNNNNNNNNNNINNSAYSNFNNSNGYNYTN</sequence>
<organism>
    <name type="scientific">Dictyostelium discoideum</name>
    <name type="common">Social amoeba</name>
    <dbReference type="NCBI Taxonomy" id="44689"/>
    <lineage>
        <taxon>Eukaryota</taxon>
        <taxon>Amoebozoa</taxon>
        <taxon>Evosea</taxon>
        <taxon>Eumycetozoa</taxon>
        <taxon>Dictyostelia</taxon>
        <taxon>Dictyosteliales</taxon>
        <taxon>Dictyosteliaceae</taxon>
        <taxon>Dictyostelium</taxon>
    </lineage>
</organism>
<proteinExistence type="predicted"/>
<keyword id="KW-0472">Membrane</keyword>
<keyword id="KW-1185">Reference proteome</keyword>
<keyword id="KW-0812">Transmembrane</keyword>
<keyword id="KW-1133">Transmembrane helix</keyword>
<dbReference type="EMBL" id="AAFI02000073">
    <property type="protein sequence ID" value="EAL64949.1"/>
    <property type="molecule type" value="Genomic_DNA"/>
</dbReference>
<dbReference type="RefSeq" id="XP_639965.1">
    <property type="nucleotide sequence ID" value="XM_634873.1"/>
</dbReference>
<dbReference type="SMR" id="Q54NV2"/>
<dbReference type="FunCoup" id="Q54NV2">
    <property type="interactions" value="18"/>
</dbReference>
<dbReference type="PaxDb" id="44689-DDB0238420"/>
<dbReference type="EnsemblProtists" id="EAL64949">
    <property type="protein sequence ID" value="EAL64949"/>
    <property type="gene ID" value="DDB_G0284971"/>
</dbReference>
<dbReference type="GeneID" id="8624876"/>
<dbReference type="KEGG" id="ddi:DDB_G0284971"/>
<dbReference type="dictyBase" id="DDB_G0284971"/>
<dbReference type="VEuPathDB" id="AmoebaDB:DDB_G0284971"/>
<dbReference type="eggNOG" id="ENOG502RHS7">
    <property type="taxonomic scope" value="Eukaryota"/>
</dbReference>
<dbReference type="HOGENOM" id="CLU_812398_0_0_1"/>
<dbReference type="InParanoid" id="Q54NV2"/>
<dbReference type="OMA" id="DIYIFET"/>
<dbReference type="PRO" id="PR:Q54NV2"/>
<dbReference type="Proteomes" id="UP000002195">
    <property type="component" value="Chromosome 4"/>
</dbReference>
<dbReference type="GO" id="GO:0016020">
    <property type="term" value="C:membrane"/>
    <property type="evidence" value="ECO:0007669"/>
    <property type="project" value="UniProtKB-SubCell"/>
</dbReference>
<accession>Q54NV2</accession>
<gene>
    <name type="ORF">DDB_G0284971</name>
</gene>